<dbReference type="EMBL" id="X15099">
    <property type="protein sequence ID" value="CAA33202.1"/>
    <property type="molecule type" value="Genomic_DNA"/>
</dbReference>
<dbReference type="EMBL" id="Z28138">
    <property type="protein sequence ID" value="CAA81979.1"/>
    <property type="molecule type" value="Genomic_DNA"/>
</dbReference>
<dbReference type="EMBL" id="BK006944">
    <property type="protein sequence ID" value="DAA09025.1"/>
    <property type="molecule type" value="Genomic_DNA"/>
</dbReference>
<dbReference type="PIR" id="S22245">
    <property type="entry name" value="R5BY31"/>
</dbReference>
<dbReference type="RefSeq" id="NP_012784.1">
    <property type="nucleotide sequence ID" value="NM_001179704.1"/>
</dbReference>
<dbReference type="PDB" id="3J6B">
    <property type="method" value="EM"/>
    <property type="resolution" value="3.20 A"/>
    <property type="chains" value="c=1-131"/>
</dbReference>
<dbReference type="PDB" id="5MRC">
    <property type="method" value="EM"/>
    <property type="resolution" value="3.25 A"/>
    <property type="chains" value="c=13-131"/>
</dbReference>
<dbReference type="PDB" id="5MRE">
    <property type="method" value="EM"/>
    <property type="resolution" value="3.75 A"/>
    <property type="chains" value="c=13-131"/>
</dbReference>
<dbReference type="PDB" id="5MRF">
    <property type="method" value="EM"/>
    <property type="resolution" value="4.97 A"/>
    <property type="chains" value="c=13-131"/>
</dbReference>
<dbReference type="PDBsum" id="3J6B"/>
<dbReference type="PDBsum" id="5MRC"/>
<dbReference type="PDBsum" id="5MRE"/>
<dbReference type="PDBsum" id="5MRF"/>
<dbReference type="EMDB" id="EMD-3551"/>
<dbReference type="EMDB" id="EMD-3552"/>
<dbReference type="EMDB" id="EMD-3553"/>
<dbReference type="SMR" id="P14063"/>
<dbReference type="BioGRID" id="33999">
    <property type="interactions" value="95"/>
</dbReference>
<dbReference type="ComplexPortal" id="CPX-1602">
    <property type="entry name" value="54S mitochondrial large ribosomal subunit"/>
</dbReference>
<dbReference type="DIP" id="DIP-5089N"/>
<dbReference type="FunCoup" id="P14063">
    <property type="interactions" value="149"/>
</dbReference>
<dbReference type="IntAct" id="P14063">
    <property type="interactions" value="63"/>
</dbReference>
<dbReference type="STRING" id="4932.YKL138C"/>
<dbReference type="PaxDb" id="4932-YKL138C"/>
<dbReference type="PeptideAtlas" id="P14063"/>
<dbReference type="EnsemblFungi" id="YKL138C_mRNA">
    <property type="protein sequence ID" value="YKL138C"/>
    <property type="gene ID" value="YKL138C"/>
</dbReference>
<dbReference type="GeneID" id="853720"/>
<dbReference type="KEGG" id="sce:YKL138C"/>
<dbReference type="AGR" id="SGD:S000001621"/>
<dbReference type="SGD" id="S000001621">
    <property type="gene designation" value="MRPL31"/>
</dbReference>
<dbReference type="VEuPathDB" id="FungiDB:YKL138C"/>
<dbReference type="eggNOG" id="ENOG502S81F">
    <property type="taxonomic scope" value="Eukaryota"/>
</dbReference>
<dbReference type="HOGENOM" id="CLU_141719_0_0_1"/>
<dbReference type="InParanoid" id="P14063"/>
<dbReference type="OMA" id="KYTVFDR"/>
<dbReference type="OrthoDB" id="2332379at2759"/>
<dbReference type="BioCyc" id="YEAST:G3O-31915-MONOMER"/>
<dbReference type="BioGRID-ORCS" id="853720">
    <property type="hits" value="7 hits in 10 CRISPR screens"/>
</dbReference>
<dbReference type="PRO" id="PR:P14063"/>
<dbReference type="Proteomes" id="UP000002311">
    <property type="component" value="Chromosome XI"/>
</dbReference>
<dbReference type="RNAct" id="P14063">
    <property type="molecule type" value="protein"/>
</dbReference>
<dbReference type="GO" id="GO:0005743">
    <property type="term" value="C:mitochondrial inner membrane"/>
    <property type="evidence" value="ECO:0000303"/>
    <property type="project" value="ComplexPortal"/>
</dbReference>
<dbReference type="GO" id="GO:0005762">
    <property type="term" value="C:mitochondrial large ribosomal subunit"/>
    <property type="evidence" value="ECO:0000314"/>
    <property type="project" value="SGD"/>
</dbReference>
<dbReference type="GO" id="GO:0005739">
    <property type="term" value="C:mitochondrion"/>
    <property type="evidence" value="ECO:0007005"/>
    <property type="project" value="SGD"/>
</dbReference>
<dbReference type="GO" id="GO:0003735">
    <property type="term" value="F:structural constituent of ribosome"/>
    <property type="evidence" value="ECO:0000314"/>
    <property type="project" value="SGD"/>
</dbReference>
<dbReference type="GO" id="GO:0032543">
    <property type="term" value="P:mitochondrial translation"/>
    <property type="evidence" value="ECO:0000303"/>
    <property type="project" value="ComplexPortal"/>
</dbReference>
<dbReference type="InterPro" id="IPR016340">
    <property type="entry name" value="Ribosomal_mL60"/>
</dbReference>
<dbReference type="PANTHER" id="PTHR28271">
    <property type="entry name" value="54S RIBOSOMAL PROTEIN L31, MITOCHONDRIAL"/>
    <property type="match status" value="1"/>
</dbReference>
<dbReference type="PANTHER" id="PTHR28271:SF1">
    <property type="entry name" value="LARGE RIBOSOMAL SUBUNIT PROTEIN ML60"/>
    <property type="match status" value="1"/>
</dbReference>
<dbReference type="Pfam" id="PF09784">
    <property type="entry name" value="L31"/>
    <property type="match status" value="1"/>
</dbReference>
<dbReference type="PIRSF" id="PIRSF002216">
    <property type="entry name" value="MRPL31_prd"/>
    <property type="match status" value="1"/>
</dbReference>
<sequence length="131" mass="15520">MFGPFKLTSPVAGGLLWKIPWRMSTHQKTRQRERLRNVDQVIKQLTLGLHVQRCQDKGLTYQEAMESKKKYKPRSKSLRLLNKPSVFPKENQMSSKDKYWTFDKKAVGYRKGIHKVPKWTKISIRKAPKFF</sequence>
<gene>
    <name type="primary">MRPL31</name>
    <name type="ordered locus">YKL138C</name>
</gene>
<protein>
    <recommendedName>
        <fullName evidence="8">Large ribosomal subunit protein mL60</fullName>
    </recommendedName>
    <alternativeName>
        <fullName>54S ribosomal protein L31, mitochondrial</fullName>
    </alternativeName>
    <alternativeName>
        <fullName>YmL31</fullName>
    </alternativeName>
</protein>
<name>RM31_YEAST</name>
<reference key="1">
    <citation type="journal article" date="1989" name="Eur. J. Biochem.">
        <title>Molecular cloning of the nuclear gene for mitochondrial ribosomal protein YmL31 from Saccharomyces cerevisiae.</title>
        <authorList>
            <person name="Grohmann L."/>
            <person name="Graack H.-R."/>
            <person name="Kitakawa M."/>
        </authorList>
    </citation>
    <scope>NUCLEOTIDE SEQUENCE [GENOMIC DNA]</scope>
    <source>
        <strain>07173</strain>
    </source>
</reference>
<reference key="2">
    <citation type="journal article" date="1994" name="Nature">
        <title>Complete DNA sequence of yeast chromosome XI.</title>
        <authorList>
            <person name="Dujon B."/>
            <person name="Alexandraki D."/>
            <person name="Andre B."/>
            <person name="Ansorge W."/>
            <person name="Baladron V."/>
            <person name="Ballesta J.P.G."/>
            <person name="Banrevi A."/>
            <person name="Bolle P.-A."/>
            <person name="Bolotin-Fukuhara M."/>
            <person name="Bossier P."/>
            <person name="Bou G."/>
            <person name="Boyer J."/>
            <person name="Buitrago M.J."/>
            <person name="Cheret G."/>
            <person name="Colleaux L."/>
            <person name="Daignan-Fornier B."/>
            <person name="del Rey F."/>
            <person name="Dion C."/>
            <person name="Domdey H."/>
            <person name="Duesterhoeft A."/>
            <person name="Duesterhus S."/>
            <person name="Entian K.-D."/>
            <person name="Erfle H."/>
            <person name="Esteban P.F."/>
            <person name="Feldmann H."/>
            <person name="Fernandes L."/>
            <person name="Fobo G.M."/>
            <person name="Fritz C."/>
            <person name="Fukuhara H."/>
            <person name="Gabel C."/>
            <person name="Gaillon L."/>
            <person name="Garcia-Cantalejo J.M."/>
            <person name="Garcia-Ramirez J.J."/>
            <person name="Gent M.E."/>
            <person name="Ghazvini M."/>
            <person name="Goffeau A."/>
            <person name="Gonzalez A."/>
            <person name="Grothues D."/>
            <person name="Guerreiro P."/>
            <person name="Hegemann J.H."/>
            <person name="Hewitt N."/>
            <person name="Hilger F."/>
            <person name="Hollenberg C.P."/>
            <person name="Horaitis O."/>
            <person name="Indge K.J."/>
            <person name="Jacquier A."/>
            <person name="James C.M."/>
            <person name="Jauniaux J.-C."/>
            <person name="Jimenez A."/>
            <person name="Keuchel H."/>
            <person name="Kirchrath L."/>
            <person name="Kleine K."/>
            <person name="Koetter P."/>
            <person name="Legrain P."/>
            <person name="Liebl S."/>
            <person name="Louis E.J."/>
            <person name="Maia e Silva A."/>
            <person name="Marck C."/>
            <person name="Monnier A.-L."/>
            <person name="Moestl D."/>
            <person name="Mueller S."/>
            <person name="Obermaier B."/>
            <person name="Oliver S.G."/>
            <person name="Pallier C."/>
            <person name="Pascolo S."/>
            <person name="Pfeiffer F."/>
            <person name="Philippsen P."/>
            <person name="Planta R.J."/>
            <person name="Pohl F.M."/>
            <person name="Pohl T.M."/>
            <person name="Poehlmann R."/>
            <person name="Portetelle D."/>
            <person name="Purnelle B."/>
            <person name="Puzos V."/>
            <person name="Ramezani Rad M."/>
            <person name="Rasmussen S.W."/>
            <person name="Remacha M.A."/>
            <person name="Revuelta J.L."/>
            <person name="Richard G.-F."/>
            <person name="Rieger M."/>
            <person name="Rodrigues-Pousada C."/>
            <person name="Rose M."/>
            <person name="Rupp T."/>
            <person name="Santos M.A."/>
            <person name="Schwager C."/>
            <person name="Sensen C."/>
            <person name="Skala J."/>
            <person name="Soares H."/>
            <person name="Sor F."/>
            <person name="Stegemann J."/>
            <person name="Tettelin H."/>
            <person name="Thierry A."/>
            <person name="Tzermia M."/>
            <person name="Urrestarazu L.A."/>
            <person name="van Dyck L."/>
            <person name="van Vliet-Reedijk J.C."/>
            <person name="Valens M."/>
            <person name="Vandenbol M."/>
            <person name="Vilela C."/>
            <person name="Vissers S."/>
            <person name="von Wettstein D."/>
            <person name="Voss H."/>
            <person name="Wiemann S."/>
            <person name="Xu G."/>
            <person name="Zimmermann J."/>
            <person name="Haasemann M."/>
            <person name="Becker I."/>
            <person name="Mewes H.-W."/>
        </authorList>
    </citation>
    <scope>NUCLEOTIDE SEQUENCE [LARGE SCALE GENOMIC DNA]</scope>
    <source>
        <strain>ATCC 204508 / S288c</strain>
    </source>
</reference>
<reference key="3">
    <citation type="journal article" date="2014" name="G3 (Bethesda)">
        <title>The reference genome sequence of Saccharomyces cerevisiae: Then and now.</title>
        <authorList>
            <person name="Engel S.R."/>
            <person name="Dietrich F.S."/>
            <person name="Fisk D.G."/>
            <person name="Binkley G."/>
            <person name="Balakrishnan R."/>
            <person name="Costanzo M.C."/>
            <person name="Dwight S.S."/>
            <person name="Hitz B.C."/>
            <person name="Karra K."/>
            <person name="Nash R.S."/>
            <person name="Weng S."/>
            <person name="Wong E.D."/>
            <person name="Lloyd P."/>
            <person name="Skrzypek M.S."/>
            <person name="Miyasato S.R."/>
            <person name="Simison M."/>
            <person name="Cherry J.M."/>
        </authorList>
    </citation>
    <scope>GENOME REANNOTATION</scope>
    <source>
        <strain>ATCC 204508 / S288c</strain>
    </source>
</reference>
<reference key="4">
    <citation type="journal article" date="1988" name="FEBS Lett.">
        <title>Mitochondrial ribosomes of yeast: isolation of individual proteins and N-terminal sequencing.</title>
        <authorList>
            <person name="Graack H.-R."/>
            <person name="Grohmann L."/>
            <person name="Choli T."/>
        </authorList>
    </citation>
    <scope>PROTEIN SEQUENCE OF 13-50</scope>
    <scope>SUBUNIT</scope>
    <source>
        <strain>07173</strain>
    </source>
</reference>
<reference key="5">
    <citation type="journal article" date="2002" name="Eur. J. Biochem.">
        <title>Tag-mediated isolation of yeast mitochondrial ribosome and mass spectrometric identification of its new components.</title>
        <authorList>
            <person name="Gan X."/>
            <person name="Kitakawa M."/>
            <person name="Yoshino K."/>
            <person name="Oshiro N."/>
            <person name="Yonezawa K."/>
            <person name="Isono K."/>
        </authorList>
    </citation>
    <scope>IDENTIFICATION IN THE MITOCHONDRIAL RIBOSOMAL LARGE COMPLEX</scope>
    <scope>IDENTIFICATION BY MASS SPECTROMETRY</scope>
</reference>
<reference key="6">
    <citation type="journal article" date="2003" name="Nature">
        <title>Global analysis of protein localization in budding yeast.</title>
        <authorList>
            <person name="Huh W.-K."/>
            <person name="Falvo J.V."/>
            <person name="Gerke L.C."/>
            <person name="Carroll A.S."/>
            <person name="Howson R.W."/>
            <person name="Weissman J.S."/>
            <person name="O'Shea E.K."/>
        </authorList>
    </citation>
    <scope>SUBCELLULAR LOCATION [LARGE SCALE ANALYSIS]</scope>
</reference>
<reference key="7">
    <citation type="journal article" date="2003" name="Nature">
        <title>Global analysis of protein expression in yeast.</title>
        <authorList>
            <person name="Ghaemmaghami S."/>
            <person name="Huh W.-K."/>
            <person name="Bower K."/>
            <person name="Howson R.W."/>
            <person name="Belle A."/>
            <person name="Dephoure N."/>
            <person name="O'Shea E.K."/>
            <person name="Weissman J.S."/>
        </authorList>
    </citation>
    <scope>LEVEL OF PROTEIN EXPRESSION [LARGE SCALE ANALYSIS]</scope>
</reference>
<reference key="8">
    <citation type="journal article" date="2015" name="Nat. Commun.">
        <title>Organization of the mitochondrial translation machinery studied in situ by cryoelectron tomography.</title>
        <authorList>
            <person name="Pfeffer S."/>
            <person name="Woellhaf M.W."/>
            <person name="Herrmann J.M."/>
            <person name="Forster F."/>
        </authorList>
    </citation>
    <scope>SUBCELLULAR LOCATION</scope>
</reference>
<reference key="9">
    <citation type="journal article" date="2014" name="Science">
        <title>Structure of the yeast mitochondrial large ribosomal subunit.</title>
        <authorList>
            <person name="Amunts A."/>
            <person name="Brown A."/>
            <person name="Bai X.C."/>
            <person name="Llacer J.L."/>
            <person name="Hussain T."/>
            <person name="Emsley P."/>
            <person name="Long F."/>
            <person name="Murshudov G."/>
            <person name="Scheres S.H."/>
            <person name="Ramakrishnan V."/>
        </authorList>
    </citation>
    <scope>STRUCTURE BY ELECTRON MICROSCOPY (3.20 ANGSTROMS)</scope>
    <scope>SUBUNIT</scope>
</reference>
<proteinExistence type="evidence at protein level"/>
<evidence type="ECO:0000269" key="1">
    <source>
    </source>
</evidence>
<evidence type="ECO:0000269" key="2">
    <source>
    </source>
</evidence>
<evidence type="ECO:0000269" key="3">
    <source>
    </source>
</evidence>
<evidence type="ECO:0000269" key="4">
    <source>
    </source>
</evidence>
<evidence type="ECO:0000269" key="5">
    <source>
    </source>
</evidence>
<evidence type="ECO:0000269" key="6">
    <source>
    </source>
</evidence>
<evidence type="ECO:0000269" key="7">
    <source>
    </source>
</evidence>
<evidence type="ECO:0000303" key="8">
    <source>
    </source>
</evidence>
<evidence type="ECO:0000305" key="9"/>
<evidence type="ECO:0000305" key="10">
    <source>
    </source>
</evidence>
<evidence type="ECO:0000305" key="11">
    <source>
    </source>
</evidence>
<organism>
    <name type="scientific">Saccharomyces cerevisiae (strain ATCC 204508 / S288c)</name>
    <name type="common">Baker's yeast</name>
    <dbReference type="NCBI Taxonomy" id="559292"/>
    <lineage>
        <taxon>Eukaryota</taxon>
        <taxon>Fungi</taxon>
        <taxon>Dikarya</taxon>
        <taxon>Ascomycota</taxon>
        <taxon>Saccharomycotina</taxon>
        <taxon>Saccharomycetes</taxon>
        <taxon>Saccharomycetales</taxon>
        <taxon>Saccharomycetaceae</taxon>
        <taxon>Saccharomyces</taxon>
    </lineage>
</organism>
<accession>P14063</accession>
<accession>D6VX59</accession>
<keyword id="KW-0002">3D-structure</keyword>
<keyword id="KW-0903">Direct protein sequencing</keyword>
<keyword id="KW-0496">Mitochondrion</keyword>
<keyword id="KW-1185">Reference proteome</keyword>
<keyword id="KW-0687">Ribonucleoprotein</keyword>
<keyword id="KW-0689">Ribosomal protein</keyword>
<keyword id="KW-0809">Transit peptide</keyword>
<feature type="transit peptide" description="Mitochondrion" evidence="6 7">
    <location>
        <begin position="1"/>
        <end position="12"/>
    </location>
</feature>
<feature type="chain" id="PRO_0000030579" description="Large ribosomal subunit protein mL60">
    <location>
        <begin position="13"/>
        <end position="131"/>
    </location>
</feature>
<comment type="function">
    <text evidence="10 11">Component of the mitochondrial ribosome (mitoribosome), a dedicated translation machinery responsible for the synthesis of mitochondrial genome-encoded proteins, including at least some of the essential transmembrane subunits of the mitochondrial respiratory chain. The mitoribosomes are attached to the mitochondrial inner membrane and translation products are cotranslationally integrated into the membrane.</text>
</comment>
<comment type="subunit">
    <text evidence="1 4 7">Component of the mitochondrial large ribosomal subunit (mt-LSU). Mature yeast 74S mitochondrial ribosomes consist of a small (37S) and a large (54S) subunit. The 37S small subunit contains a 15S ribosomal RNA (15S mt-rRNA) and 34 different proteins. The 54S large subunit contains a 21S rRNA (21S mt-rRNA) and 46 different proteins.</text>
</comment>
<comment type="subcellular location">
    <subcellularLocation>
        <location evidence="2">Mitochondrion</location>
    </subcellularLocation>
    <text evidence="5">Mitoribosomes are tethered to the mitochondrial inner membrane and spatially aligned with the membrane insertion machinery through two distinct membrane contact sites, formed by the 21S rRNA expansion segment 96-ES1 and the inner membrane protein MBA1.</text>
</comment>
<comment type="miscellaneous">
    <text evidence="3">Present with 2100 molecules/cell in log phase SD medium.</text>
</comment>
<comment type="similarity">
    <text evidence="9">Belongs to the mitochondrion-specific ribosomal protein mL60 family.</text>
</comment>